<organism>
    <name type="scientific">Saccharophagus degradans (strain 2-40 / ATCC 43961 / DSM 17024)</name>
    <dbReference type="NCBI Taxonomy" id="203122"/>
    <lineage>
        <taxon>Bacteria</taxon>
        <taxon>Pseudomonadati</taxon>
        <taxon>Pseudomonadota</taxon>
        <taxon>Gammaproteobacteria</taxon>
        <taxon>Cellvibrionales</taxon>
        <taxon>Cellvibrionaceae</taxon>
        <taxon>Saccharophagus</taxon>
    </lineage>
</organism>
<gene>
    <name type="ordered locus">Sde_1551</name>
</gene>
<comment type="subcellular location">
    <subcellularLocation>
        <location evidence="1">Cytoplasm</location>
    </subcellularLocation>
</comment>
<comment type="similarity">
    <text evidence="1">Belongs to the TACO1 family.</text>
</comment>
<sequence length="238" mass="26215">MGRAFQNRKESMAKTSDQNAKVYSKYSREIYTCAKSGGVDPDGNLSLRSLLDRAKKDQVPSHVIQKAIDKAKGGGGEDFATARYEGFGPGNCMVIVDCLTDNPNRTYGDVRTCFNKAKAKIGSQGTVMHMFDHCAIFVFAGDDEEAILEALMMADVDVTDIECEDGKITVFTPHTEYGKAKTALAEVTNGAEFEVDEIQFVPQTQTAISGDDIEVFEKFLSMLDDLDDVQNVYHNAEY</sequence>
<protein>
    <recommendedName>
        <fullName evidence="1">Probable transcriptional regulatory protein Sde_1551</fullName>
    </recommendedName>
</protein>
<proteinExistence type="inferred from homology"/>
<keyword id="KW-0963">Cytoplasm</keyword>
<keyword id="KW-0238">DNA-binding</keyword>
<keyword id="KW-1185">Reference proteome</keyword>
<keyword id="KW-0804">Transcription</keyword>
<keyword id="KW-0805">Transcription regulation</keyword>
<feature type="chain" id="PRO_0000257124" description="Probable transcriptional regulatory protein Sde_1551">
    <location>
        <begin position="1"/>
        <end position="238"/>
    </location>
</feature>
<accession>Q21KG6</accession>
<dbReference type="EMBL" id="CP000282">
    <property type="protein sequence ID" value="ABD80813.1"/>
    <property type="molecule type" value="Genomic_DNA"/>
</dbReference>
<dbReference type="RefSeq" id="WP_011468033.1">
    <property type="nucleotide sequence ID" value="NC_007912.1"/>
</dbReference>
<dbReference type="SMR" id="Q21KG6"/>
<dbReference type="STRING" id="203122.Sde_1551"/>
<dbReference type="GeneID" id="98613226"/>
<dbReference type="KEGG" id="sde:Sde_1551"/>
<dbReference type="eggNOG" id="COG0217">
    <property type="taxonomic scope" value="Bacteria"/>
</dbReference>
<dbReference type="HOGENOM" id="CLU_062974_2_0_6"/>
<dbReference type="OrthoDB" id="9781053at2"/>
<dbReference type="Proteomes" id="UP000001947">
    <property type="component" value="Chromosome"/>
</dbReference>
<dbReference type="GO" id="GO:0005829">
    <property type="term" value="C:cytosol"/>
    <property type="evidence" value="ECO:0007669"/>
    <property type="project" value="TreeGrafter"/>
</dbReference>
<dbReference type="GO" id="GO:0003677">
    <property type="term" value="F:DNA binding"/>
    <property type="evidence" value="ECO:0007669"/>
    <property type="project" value="UniProtKB-UniRule"/>
</dbReference>
<dbReference type="GO" id="GO:0006355">
    <property type="term" value="P:regulation of DNA-templated transcription"/>
    <property type="evidence" value="ECO:0007669"/>
    <property type="project" value="UniProtKB-UniRule"/>
</dbReference>
<dbReference type="FunFam" id="1.10.10.200:FF:000003">
    <property type="entry name" value="Probable transcriptional regulatory protein YeeN"/>
    <property type="match status" value="1"/>
</dbReference>
<dbReference type="Gene3D" id="1.10.10.200">
    <property type="match status" value="1"/>
</dbReference>
<dbReference type="Gene3D" id="3.30.70.980">
    <property type="match status" value="2"/>
</dbReference>
<dbReference type="HAMAP" id="MF_00693">
    <property type="entry name" value="Transcrip_reg_TACO1"/>
    <property type="match status" value="1"/>
</dbReference>
<dbReference type="InterPro" id="IPR017856">
    <property type="entry name" value="Integrase-like_N"/>
</dbReference>
<dbReference type="InterPro" id="IPR048300">
    <property type="entry name" value="TACO1_YebC-like_2nd/3rd_dom"/>
</dbReference>
<dbReference type="InterPro" id="IPR049083">
    <property type="entry name" value="TACO1_YebC_N"/>
</dbReference>
<dbReference type="InterPro" id="IPR002876">
    <property type="entry name" value="Transcrip_reg_TACO1-like"/>
</dbReference>
<dbReference type="InterPro" id="IPR026564">
    <property type="entry name" value="Transcrip_reg_TACO1-like_dom3"/>
</dbReference>
<dbReference type="InterPro" id="IPR029072">
    <property type="entry name" value="YebC-like"/>
</dbReference>
<dbReference type="NCBIfam" id="NF009044">
    <property type="entry name" value="PRK12378.1"/>
    <property type="match status" value="1"/>
</dbReference>
<dbReference type="PANTHER" id="PTHR12532">
    <property type="entry name" value="TRANSLATIONAL ACTIVATOR OF CYTOCHROME C OXIDASE 1"/>
    <property type="match status" value="1"/>
</dbReference>
<dbReference type="PANTHER" id="PTHR12532:SF0">
    <property type="entry name" value="TRANSLATIONAL ACTIVATOR OF CYTOCHROME C OXIDASE 1"/>
    <property type="match status" value="1"/>
</dbReference>
<dbReference type="Pfam" id="PF20772">
    <property type="entry name" value="TACO1_YebC_N"/>
    <property type="match status" value="1"/>
</dbReference>
<dbReference type="Pfam" id="PF01709">
    <property type="entry name" value="Transcrip_reg"/>
    <property type="match status" value="1"/>
</dbReference>
<dbReference type="SUPFAM" id="SSF75625">
    <property type="entry name" value="YebC-like"/>
    <property type="match status" value="1"/>
</dbReference>
<evidence type="ECO:0000255" key="1">
    <source>
        <dbReference type="HAMAP-Rule" id="MF_00693"/>
    </source>
</evidence>
<name>Y1551_SACD2</name>
<reference key="1">
    <citation type="journal article" date="2008" name="PLoS Genet.">
        <title>Complete genome sequence of the complex carbohydrate-degrading marine bacterium, Saccharophagus degradans strain 2-40 T.</title>
        <authorList>
            <person name="Weiner R.M."/>
            <person name="Taylor L.E. II"/>
            <person name="Henrissat B."/>
            <person name="Hauser L."/>
            <person name="Land M."/>
            <person name="Coutinho P.M."/>
            <person name="Rancurel C."/>
            <person name="Saunders E.H."/>
            <person name="Longmire A.G."/>
            <person name="Zhang H."/>
            <person name="Bayer E.A."/>
            <person name="Gilbert H.J."/>
            <person name="Larimer F."/>
            <person name="Zhulin I.B."/>
            <person name="Ekborg N.A."/>
            <person name="Lamed R."/>
            <person name="Richardson P.M."/>
            <person name="Borovok I."/>
            <person name="Hutcheson S."/>
        </authorList>
    </citation>
    <scope>NUCLEOTIDE SEQUENCE [LARGE SCALE GENOMIC DNA]</scope>
    <source>
        <strain>2-40 / ATCC 43961 / DSM 17024</strain>
    </source>
</reference>